<comment type="function">
    <text evidence="1">One of the primary rRNA binding proteins, it binds directly to 16S rRNA central domain where it helps coordinate assembly of the platform of the 30S subunit.</text>
</comment>
<comment type="subunit">
    <text evidence="1">Part of the 30S ribosomal subunit. Contacts proteins S5 and S12.</text>
</comment>
<comment type="similarity">
    <text evidence="1">Belongs to the universal ribosomal protein uS8 family.</text>
</comment>
<proteinExistence type="inferred from homology"/>
<feature type="chain" id="PRO_1000140611" description="Small ribosomal subunit protein uS8">
    <location>
        <begin position="1"/>
        <end position="130"/>
    </location>
</feature>
<gene>
    <name evidence="1" type="primary">rpsH</name>
    <name type="ordered locus">SeSA_A3622</name>
</gene>
<reference key="1">
    <citation type="journal article" date="2011" name="J. Bacteriol.">
        <title>Comparative genomics of 28 Salmonella enterica isolates: evidence for CRISPR-mediated adaptive sublineage evolution.</title>
        <authorList>
            <person name="Fricke W.F."/>
            <person name="Mammel M.K."/>
            <person name="McDermott P.F."/>
            <person name="Tartera C."/>
            <person name="White D.G."/>
            <person name="Leclerc J.E."/>
            <person name="Ravel J."/>
            <person name="Cebula T.A."/>
        </authorList>
    </citation>
    <scope>NUCLEOTIDE SEQUENCE [LARGE SCALE GENOMIC DNA]</scope>
    <source>
        <strain>CVM19633</strain>
    </source>
</reference>
<organism>
    <name type="scientific">Salmonella schwarzengrund (strain CVM19633)</name>
    <dbReference type="NCBI Taxonomy" id="439843"/>
    <lineage>
        <taxon>Bacteria</taxon>
        <taxon>Pseudomonadati</taxon>
        <taxon>Pseudomonadota</taxon>
        <taxon>Gammaproteobacteria</taxon>
        <taxon>Enterobacterales</taxon>
        <taxon>Enterobacteriaceae</taxon>
        <taxon>Salmonella</taxon>
    </lineage>
</organism>
<evidence type="ECO:0000255" key="1">
    <source>
        <dbReference type="HAMAP-Rule" id="MF_01302"/>
    </source>
</evidence>
<evidence type="ECO:0000305" key="2"/>
<name>RS8_SALSV</name>
<keyword id="KW-0687">Ribonucleoprotein</keyword>
<keyword id="KW-0689">Ribosomal protein</keyword>
<keyword id="KW-0694">RNA-binding</keyword>
<keyword id="KW-0699">rRNA-binding</keyword>
<dbReference type="EMBL" id="CP001127">
    <property type="protein sequence ID" value="ACF89962.1"/>
    <property type="molecule type" value="Genomic_DNA"/>
</dbReference>
<dbReference type="RefSeq" id="WP_000062611.1">
    <property type="nucleotide sequence ID" value="NC_011094.1"/>
</dbReference>
<dbReference type="SMR" id="B4TXC8"/>
<dbReference type="GeneID" id="93778681"/>
<dbReference type="KEGG" id="sew:SeSA_A3622"/>
<dbReference type="HOGENOM" id="CLU_098428_0_0_6"/>
<dbReference type="Proteomes" id="UP000001865">
    <property type="component" value="Chromosome"/>
</dbReference>
<dbReference type="GO" id="GO:1990904">
    <property type="term" value="C:ribonucleoprotein complex"/>
    <property type="evidence" value="ECO:0007669"/>
    <property type="project" value="UniProtKB-KW"/>
</dbReference>
<dbReference type="GO" id="GO:0005840">
    <property type="term" value="C:ribosome"/>
    <property type="evidence" value="ECO:0007669"/>
    <property type="project" value="UniProtKB-KW"/>
</dbReference>
<dbReference type="GO" id="GO:0019843">
    <property type="term" value="F:rRNA binding"/>
    <property type="evidence" value="ECO:0007669"/>
    <property type="project" value="UniProtKB-UniRule"/>
</dbReference>
<dbReference type="GO" id="GO:0003735">
    <property type="term" value="F:structural constituent of ribosome"/>
    <property type="evidence" value="ECO:0007669"/>
    <property type="project" value="InterPro"/>
</dbReference>
<dbReference type="GO" id="GO:0006412">
    <property type="term" value="P:translation"/>
    <property type="evidence" value="ECO:0007669"/>
    <property type="project" value="UniProtKB-UniRule"/>
</dbReference>
<dbReference type="FunFam" id="3.30.1370.30:FF:000003">
    <property type="entry name" value="30S ribosomal protein S8"/>
    <property type="match status" value="1"/>
</dbReference>
<dbReference type="FunFam" id="3.30.1490.10:FF:000001">
    <property type="entry name" value="30S ribosomal protein S8"/>
    <property type="match status" value="1"/>
</dbReference>
<dbReference type="Gene3D" id="3.30.1370.30">
    <property type="match status" value="1"/>
</dbReference>
<dbReference type="Gene3D" id="3.30.1490.10">
    <property type="match status" value="1"/>
</dbReference>
<dbReference type="HAMAP" id="MF_01302_B">
    <property type="entry name" value="Ribosomal_uS8_B"/>
    <property type="match status" value="1"/>
</dbReference>
<dbReference type="InterPro" id="IPR000630">
    <property type="entry name" value="Ribosomal_uS8"/>
</dbReference>
<dbReference type="InterPro" id="IPR047863">
    <property type="entry name" value="Ribosomal_uS8_CS"/>
</dbReference>
<dbReference type="InterPro" id="IPR035987">
    <property type="entry name" value="Ribosomal_uS8_sf"/>
</dbReference>
<dbReference type="NCBIfam" id="NF001109">
    <property type="entry name" value="PRK00136.1"/>
    <property type="match status" value="1"/>
</dbReference>
<dbReference type="PANTHER" id="PTHR11758">
    <property type="entry name" value="40S RIBOSOMAL PROTEIN S15A"/>
    <property type="match status" value="1"/>
</dbReference>
<dbReference type="Pfam" id="PF00410">
    <property type="entry name" value="Ribosomal_S8"/>
    <property type="match status" value="1"/>
</dbReference>
<dbReference type="SUPFAM" id="SSF56047">
    <property type="entry name" value="Ribosomal protein S8"/>
    <property type="match status" value="1"/>
</dbReference>
<dbReference type="PROSITE" id="PS00053">
    <property type="entry name" value="RIBOSOMAL_S8"/>
    <property type="match status" value="1"/>
</dbReference>
<sequence>MSMQDPIADMLTRIRNGQAANKAAVTMPSSKLKVAIANVLKEEGFIEDFKVEGDTKPELELTLKYFQGKAVVESIQRVSRPGLRIYKRKDELPKVMAGLGIAVVSTSKGVMTDRAARQAGLGGEIICYVA</sequence>
<protein>
    <recommendedName>
        <fullName evidence="1">Small ribosomal subunit protein uS8</fullName>
    </recommendedName>
    <alternativeName>
        <fullName evidence="2">30S ribosomal protein S8</fullName>
    </alternativeName>
</protein>
<accession>B4TXC8</accession>